<comment type="function">
    <text evidence="1">Catalyzes the transfer of endogenously produced octanoic acid from octanoyl-acyl-carrier-protein onto the lipoyl domains of lipoate-dependent enzymes. Lipoyl-ACP can also act as a substrate although octanoyl-ACP is likely to be the physiological substrate.</text>
</comment>
<comment type="catalytic activity">
    <reaction evidence="1">
        <text>octanoyl-[ACP] + L-lysyl-[protein] = N(6)-octanoyl-L-lysyl-[protein] + holo-[ACP] + H(+)</text>
        <dbReference type="Rhea" id="RHEA:17665"/>
        <dbReference type="Rhea" id="RHEA-COMP:9636"/>
        <dbReference type="Rhea" id="RHEA-COMP:9685"/>
        <dbReference type="Rhea" id="RHEA-COMP:9752"/>
        <dbReference type="Rhea" id="RHEA-COMP:9928"/>
        <dbReference type="ChEBI" id="CHEBI:15378"/>
        <dbReference type="ChEBI" id="CHEBI:29969"/>
        <dbReference type="ChEBI" id="CHEBI:64479"/>
        <dbReference type="ChEBI" id="CHEBI:78463"/>
        <dbReference type="ChEBI" id="CHEBI:78809"/>
        <dbReference type="EC" id="2.3.1.181"/>
    </reaction>
</comment>
<comment type="pathway">
    <text evidence="1">Protein modification; protein lipoylation via endogenous pathway; protein N(6)-(lipoyl)lysine from octanoyl-[acyl-carrier-protein]: step 1/2.</text>
</comment>
<comment type="subcellular location">
    <subcellularLocation>
        <location evidence="1">Cytoplasm</location>
    </subcellularLocation>
</comment>
<comment type="miscellaneous">
    <text evidence="1">In the reaction, the free carboxyl group of octanoic acid is attached via an amide linkage to the epsilon-amino group of a specific lysine residue of lipoyl domains of lipoate-dependent enzymes.</text>
</comment>
<comment type="similarity">
    <text evidence="1">Belongs to the LipB family.</text>
</comment>
<sequence>MYQDKILVRQLGLQPYEPISQAMHEFTDTRDDSTLDEIWLVEHYPVFTQGQAGKAEHILMPGDIPVIQSDRGGQVTYHGPGQQVMYVLLNLKRRKLGVRELVTLLEQTVVNTLAELGIEAHPRADAPGVYVGEKKICSLGLRIRRGCSFHGLALNVNMDLSPFLRINPCGYAGMEMAKISQWKPEATTNNIAPRLLENILALLNNPDFEYITA</sequence>
<reference key="1">
    <citation type="journal article" date="2011" name="Proc. Natl. Acad. Sci. U.S.A.">
        <title>Genomic anatomy of Escherichia coli O157:H7 outbreaks.</title>
        <authorList>
            <person name="Eppinger M."/>
            <person name="Mammel M.K."/>
            <person name="Leclerc J.E."/>
            <person name="Ravel J."/>
            <person name="Cebula T.A."/>
        </authorList>
    </citation>
    <scope>NUCLEOTIDE SEQUENCE [LARGE SCALE GENOMIC DNA]</scope>
    <source>
        <strain>EC4115 / EHEC</strain>
    </source>
</reference>
<organism>
    <name type="scientific">Escherichia coli O157:H7 (strain EC4115 / EHEC)</name>
    <dbReference type="NCBI Taxonomy" id="444450"/>
    <lineage>
        <taxon>Bacteria</taxon>
        <taxon>Pseudomonadati</taxon>
        <taxon>Pseudomonadota</taxon>
        <taxon>Gammaproteobacteria</taxon>
        <taxon>Enterobacterales</taxon>
        <taxon>Enterobacteriaceae</taxon>
        <taxon>Escherichia</taxon>
    </lineage>
</organism>
<proteinExistence type="inferred from homology"/>
<evidence type="ECO:0000255" key="1">
    <source>
        <dbReference type="HAMAP-Rule" id="MF_00013"/>
    </source>
</evidence>
<evidence type="ECO:0000255" key="2">
    <source>
        <dbReference type="PROSITE-ProRule" id="PRU01067"/>
    </source>
</evidence>
<accession>B5YQI1</accession>
<dbReference type="EC" id="2.3.1.181" evidence="1"/>
<dbReference type="EMBL" id="CP001164">
    <property type="protein sequence ID" value="ACI37562.1"/>
    <property type="molecule type" value="Genomic_DNA"/>
</dbReference>
<dbReference type="RefSeq" id="WP_000284027.1">
    <property type="nucleotide sequence ID" value="NC_011353.1"/>
</dbReference>
<dbReference type="SMR" id="B5YQI1"/>
<dbReference type="GeneID" id="93776852"/>
<dbReference type="KEGG" id="ecf:ECH74115_0718"/>
<dbReference type="HOGENOM" id="CLU_035168_3_1_6"/>
<dbReference type="UniPathway" id="UPA00538">
    <property type="reaction ID" value="UER00592"/>
</dbReference>
<dbReference type="GO" id="GO:0005737">
    <property type="term" value="C:cytoplasm"/>
    <property type="evidence" value="ECO:0007669"/>
    <property type="project" value="UniProtKB-SubCell"/>
</dbReference>
<dbReference type="GO" id="GO:0033819">
    <property type="term" value="F:lipoyl(octanoyl) transferase activity"/>
    <property type="evidence" value="ECO:0007669"/>
    <property type="project" value="UniProtKB-EC"/>
</dbReference>
<dbReference type="GO" id="GO:0036211">
    <property type="term" value="P:protein modification process"/>
    <property type="evidence" value="ECO:0007669"/>
    <property type="project" value="InterPro"/>
</dbReference>
<dbReference type="CDD" id="cd16444">
    <property type="entry name" value="LipB"/>
    <property type="match status" value="1"/>
</dbReference>
<dbReference type="FunFam" id="3.30.930.10:FF:000020">
    <property type="entry name" value="Octanoyltransferase"/>
    <property type="match status" value="1"/>
</dbReference>
<dbReference type="Gene3D" id="3.30.930.10">
    <property type="entry name" value="Bira Bifunctional Protein, Domain 2"/>
    <property type="match status" value="1"/>
</dbReference>
<dbReference type="HAMAP" id="MF_00013">
    <property type="entry name" value="LipB"/>
    <property type="match status" value="1"/>
</dbReference>
<dbReference type="InterPro" id="IPR045864">
    <property type="entry name" value="aa-tRNA-synth_II/BPL/LPL"/>
</dbReference>
<dbReference type="InterPro" id="IPR004143">
    <property type="entry name" value="BPL_LPL_catalytic"/>
</dbReference>
<dbReference type="InterPro" id="IPR000544">
    <property type="entry name" value="Octanoyltransferase"/>
</dbReference>
<dbReference type="InterPro" id="IPR020605">
    <property type="entry name" value="Octanoyltransferase_CS"/>
</dbReference>
<dbReference type="NCBIfam" id="TIGR00214">
    <property type="entry name" value="lipB"/>
    <property type="match status" value="1"/>
</dbReference>
<dbReference type="NCBIfam" id="NF010922">
    <property type="entry name" value="PRK14342.1"/>
    <property type="match status" value="1"/>
</dbReference>
<dbReference type="PANTHER" id="PTHR10993:SF7">
    <property type="entry name" value="LIPOYLTRANSFERASE 2, MITOCHONDRIAL-RELATED"/>
    <property type="match status" value="1"/>
</dbReference>
<dbReference type="PANTHER" id="PTHR10993">
    <property type="entry name" value="OCTANOYLTRANSFERASE"/>
    <property type="match status" value="1"/>
</dbReference>
<dbReference type="Pfam" id="PF21948">
    <property type="entry name" value="LplA-B_cat"/>
    <property type="match status" value="1"/>
</dbReference>
<dbReference type="PIRSF" id="PIRSF016262">
    <property type="entry name" value="LPLase"/>
    <property type="match status" value="1"/>
</dbReference>
<dbReference type="SUPFAM" id="SSF55681">
    <property type="entry name" value="Class II aaRS and biotin synthetases"/>
    <property type="match status" value="1"/>
</dbReference>
<dbReference type="PROSITE" id="PS51733">
    <property type="entry name" value="BPL_LPL_CATALYTIC"/>
    <property type="match status" value="1"/>
</dbReference>
<dbReference type="PROSITE" id="PS01313">
    <property type="entry name" value="LIPB"/>
    <property type="match status" value="1"/>
</dbReference>
<keyword id="KW-0012">Acyltransferase</keyword>
<keyword id="KW-0963">Cytoplasm</keyword>
<keyword id="KW-0808">Transferase</keyword>
<protein>
    <recommendedName>
        <fullName evidence="1">Octanoyltransferase</fullName>
        <ecNumber evidence="1">2.3.1.181</ecNumber>
    </recommendedName>
    <alternativeName>
        <fullName evidence="1">Lipoate-protein ligase B</fullName>
    </alternativeName>
    <alternativeName>
        <fullName evidence="1">Lipoyl/octanoyl transferase</fullName>
    </alternativeName>
    <alternativeName>
        <fullName evidence="1">Octanoyl-[acyl-carrier-protein]-protein N-octanoyltransferase</fullName>
    </alternativeName>
</protein>
<name>LIPB_ECO5E</name>
<feature type="chain" id="PRO_1000089455" description="Octanoyltransferase">
    <location>
        <begin position="1"/>
        <end position="213"/>
    </location>
</feature>
<feature type="domain" description="BPL/LPL catalytic" evidence="2">
    <location>
        <begin position="32"/>
        <end position="207"/>
    </location>
</feature>
<feature type="active site" description="Acyl-thioester intermediate" evidence="1">
    <location>
        <position position="169"/>
    </location>
</feature>
<feature type="binding site" evidence="1">
    <location>
        <begin position="71"/>
        <end position="78"/>
    </location>
    <ligand>
        <name>substrate</name>
    </ligand>
</feature>
<feature type="binding site" evidence="1">
    <location>
        <begin position="138"/>
        <end position="140"/>
    </location>
    <ligand>
        <name>substrate</name>
    </ligand>
</feature>
<feature type="binding site" evidence="1">
    <location>
        <begin position="151"/>
        <end position="153"/>
    </location>
    <ligand>
        <name>substrate</name>
    </ligand>
</feature>
<feature type="site" description="Lowers pKa of active site Cys" evidence="1">
    <location>
        <position position="135"/>
    </location>
</feature>
<gene>
    <name evidence="1" type="primary">lipB</name>
    <name type="ordered locus">ECH74115_0718</name>
</gene>